<feature type="chain" id="PRO_1000143760" description="Large ribosomal subunit protein bL21">
    <location>
        <begin position="1"/>
        <end position="103"/>
    </location>
</feature>
<proteinExistence type="inferred from homology"/>
<sequence>MYALVEINGKQYKAIEGEFLKIDKISPVEKDKLEFNSVLLINKDGEVKIGKPYVVNSLIRCTYKEDKKDKKVVSYRYRRRKSSERKVGHRQTYSYILVDEIVF</sequence>
<dbReference type="EMBL" id="CP001205">
    <property type="protein sequence ID" value="ACK75001.1"/>
    <property type="molecule type" value="Genomic_DNA"/>
</dbReference>
<dbReference type="RefSeq" id="WP_002557366.1">
    <property type="nucleotide sequence ID" value="NC_011728.1"/>
</dbReference>
<dbReference type="SMR" id="B7J0M4"/>
<dbReference type="GeneID" id="56567589"/>
<dbReference type="KEGG" id="bbz:BbuZS7_0807"/>
<dbReference type="HOGENOM" id="CLU_061463_3_2_12"/>
<dbReference type="Proteomes" id="UP000006901">
    <property type="component" value="Chromosome"/>
</dbReference>
<dbReference type="GO" id="GO:0005737">
    <property type="term" value="C:cytoplasm"/>
    <property type="evidence" value="ECO:0007669"/>
    <property type="project" value="UniProtKB-ARBA"/>
</dbReference>
<dbReference type="GO" id="GO:1990904">
    <property type="term" value="C:ribonucleoprotein complex"/>
    <property type="evidence" value="ECO:0007669"/>
    <property type="project" value="UniProtKB-KW"/>
</dbReference>
<dbReference type="GO" id="GO:0005840">
    <property type="term" value="C:ribosome"/>
    <property type="evidence" value="ECO:0007669"/>
    <property type="project" value="UniProtKB-KW"/>
</dbReference>
<dbReference type="GO" id="GO:0019843">
    <property type="term" value="F:rRNA binding"/>
    <property type="evidence" value="ECO:0007669"/>
    <property type="project" value="UniProtKB-UniRule"/>
</dbReference>
<dbReference type="GO" id="GO:0003735">
    <property type="term" value="F:structural constituent of ribosome"/>
    <property type="evidence" value="ECO:0007669"/>
    <property type="project" value="InterPro"/>
</dbReference>
<dbReference type="GO" id="GO:0006412">
    <property type="term" value="P:translation"/>
    <property type="evidence" value="ECO:0007669"/>
    <property type="project" value="UniProtKB-UniRule"/>
</dbReference>
<dbReference type="HAMAP" id="MF_01363">
    <property type="entry name" value="Ribosomal_bL21"/>
    <property type="match status" value="1"/>
</dbReference>
<dbReference type="InterPro" id="IPR028909">
    <property type="entry name" value="bL21-like"/>
</dbReference>
<dbReference type="InterPro" id="IPR036164">
    <property type="entry name" value="bL21-like_sf"/>
</dbReference>
<dbReference type="InterPro" id="IPR001787">
    <property type="entry name" value="Ribosomal_bL21"/>
</dbReference>
<dbReference type="InterPro" id="IPR018258">
    <property type="entry name" value="Ribosomal_bL21_CS"/>
</dbReference>
<dbReference type="NCBIfam" id="TIGR00061">
    <property type="entry name" value="L21"/>
    <property type="match status" value="1"/>
</dbReference>
<dbReference type="PANTHER" id="PTHR21349">
    <property type="entry name" value="50S RIBOSOMAL PROTEIN L21"/>
    <property type="match status" value="1"/>
</dbReference>
<dbReference type="PANTHER" id="PTHR21349:SF0">
    <property type="entry name" value="LARGE RIBOSOMAL SUBUNIT PROTEIN BL21M"/>
    <property type="match status" value="1"/>
</dbReference>
<dbReference type="Pfam" id="PF00829">
    <property type="entry name" value="Ribosomal_L21p"/>
    <property type="match status" value="1"/>
</dbReference>
<dbReference type="SUPFAM" id="SSF141091">
    <property type="entry name" value="L21p-like"/>
    <property type="match status" value="1"/>
</dbReference>
<dbReference type="PROSITE" id="PS01169">
    <property type="entry name" value="RIBOSOMAL_L21"/>
    <property type="match status" value="1"/>
</dbReference>
<gene>
    <name evidence="1" type="primary">rplU</name>
    <name type="ordered locus">BbuZS7_0807</name>
</gene>
<comment type="function">
    <text evidence="1">This protein binds to 23S rRNA in the presence of protein L20.</text>
</comment>
<comment type="subunit">
    <text evidence="1">Part of the 50S ribosomal subunit. Contacts protein L20.</text>
</comment>
<comment type="similarity">
    <text evidence="1">Belongs to the bacterial ribosomal protein bL21 family.</text>
</comment>
<organism>
    <name type="scientific">Borreliella burgdorferi (strain ZS7)</name>
    <name type="common">Borrelia burgdorferi</name>
    <dbReference type="NCBI Taxonomy" id="445985"/>
    <lineage>
        <taxon>Bacteria</taxon>
        <taxon>Pseudomonadati</taxon>
        <taxon>Spirochaetota</taxon>
        <taxon>Spirochaetia</taxon>
        <taxon>Spirochaetales</taxon>
        <taxon>Borreliaceae</taxon>
        <taxon>Borreliella</taxon>
    </lineage>
</organism>
<evidence type="ECO:0000255" key="1">
    <source>
        <dbReference type="HAMAP-Rule" id="MF_01363"/>
    </source>
</evidence>
<evidence type="ECO:0000305" key="2"/>
<name>RL21_BORBZ</name>
<accession>B7J0M4</accession>
<protein>
    <recommendedName>
        <fullName evidence="1">Large ribosomal subunit protein bL21</fullName>
    </recommendedName>
    <alternativeName>
        <fullName evidence="2">50S ribosomal protein L21</fullName>
    </alternativeName>
</protein>
<reference key="1">
    <citation type="journal article" date="2011" name="J. Bacteriol.">
        <title>Whole-genome sequences of thirteen isolates of Borrelia burgdorferi.</title>
        <authorList>
            <person name="Schutzer S.E."/>
            <person name="Fraser-Liggett C.M."/>
            <person name="Casjens S.R."/>
            <person name="Qiu W.G."/>
            <person name="Dunn J.J."/>
            <person name="Mongodin E.F."/>
            <person name="Luft B.J."/>
        </authorList>
    </citation>
    <scope>NUCLEOTIDE SEQUENCE [LARGE SCALE GENOMIC DNA]</scope>
    <source>
        <strain>ZS7</strain>
    </source>
</reference>
<keyword id="KW-0687">Ribonucleoprotein</keyword>
<keyword id="KW-0689">Ribosomal protein</keyword>
<keyword id="KW-0694">RNA-binding</keyword>
<keyword id="KW-0699">rRNA-binding</keyword>